<keyword id="KW-0997">Cell inner membrane</keyword>
<keyword id="KW-1003">Cell membrane</keyword>
<keyword id="KW-0342">GTP-binding</keyword>
<keyword id="KW-0378">Hydrolase</keyword>
<keyword id="KW-0472">Membrane</keyword>
<keyword id="KW-0547">Nucleotide-binding</keyword>
<keyword id="KW-0648">Protein biosynthesis</keyword>
<keyword id="KW-1185">Reference proteome</keyword>
<reference key="1">
    <citation type="journal article" date="2011" name="MBio">
        <title>Novel metabolic attributes of the genus Cyanothece, comprising a group of unicellular nitrogen-fixing Cyanobacteria.</title>
        <authorList>
            <person name="Bandyopadhyay A."/>
            <person name="Elvitigala T."/>
            <person name="Welsh E."/>
            <person name="Stockel J."/>
            <person name="Liberton M."/>
            <person name="Min H."/>
            <person name="Sherman L.A."/>
            <person name="Pakrasi H.B."/>
        </authorList>
    </citation>
    <scope>NUCLEOTIDE SEQUENCE [LARGE SCALE GENOMIC DNA]</scope>
    <source>
        <strain>PCC 8801 / RF-1</strain>
    </source>
</reference>
<dbReference type="EC" id="3.6.5.n1" evidence="1"/>
<dbReference type="EMBL" id="CP001287">
    <property type="protein sequence ID" value="ACK66537.1"/>
    <property type="molecule type" value="Genomic_DNA"/>
</dbReference>
<dbReference type="RefSeq" id="WP_012595804.1">
    <property type="nucleotide sequence ID" value="NC_011726.1"/>
</dbReference>
<dbReference type="SMR" id="B7K3Z7"/>
<dbReference type="STRING" id="41431.PCC8801_2529"/>
<dbReference type="KEGG" id="cyp:PCC8801_2529"/>
<dbReference type="eggNOG" id="COG0481">
    <property type="taxonomic scope" value="Bacteria"/>
</dbReference>
<dbReference type="HOGENOM" id="CLU_009995_3_3_3"/>
<dbReference type="OrthoDB" id="580826at2"/>
<dbReference type="Proteomes" id="UP000008204">
    <property type="component" value="Chromosome"/>
</dbReference>
<dbReference type="GO" id="GO:0005886">
    <property type="term" value="C:plasma membrane"/>
    <property type="evidence" value="ECO:0007669"/>
    <property type="project" value="UniProtKB-SubCell"/>
</dbReference>
<dbReference type="GO" id="GO:0005525">
    <property type="term" value="F:GTP binding"/>
    <property type="evidence" value="ECO:0007669"/>
    <property type="project" value="UniProtKB-KW"/>
</dbReference>
<dbReference type="GO" id="GO:0003924">
    <property type="term" value="F:GTPase activity"/>
    <property type="evidence" value="ECO:0007669"/>
    <property type="project" value="InterPro"/>
</dbReference>
<dbReference type="GO" id="GO:0043022">
    <property type="term" value="F:ribosome binding"/>
    <property type="evidence" value="ECO:0007669"/>
    <property type="project" value="TreeGrafter"/>
</dbReference>
<dbReference type="GO" id="GO:0045727">
    <property type="term" value="P:positive regulation of translation"/>
    <property type="evidence" value="ECO:0007669"/>
    <property type="project" value="TreeGrafter"/>
</dbReference>
<dbReference type="GO" id="GO:0006412">
    <property type="term" value="P:translation"/>
    <property type="evidence" value="ECO:0007669"/>
    <property type="project" value="UniProtKB-KW"/>
</dbReference>
<dbReference type="CDD" id="cd03699">
    <property type="entry name" value="EF4_II"/>
    <property type="match status" value="1"/>
</dbReference>
<dbReference type="CDD" id="cd16260">
    <property type="entry name" value="EF4_III"/>
    <property type="match status" value="1"/>
</dbReference>
<dbReference type="CDD" id="cd01890">
    <property type="entry name" value="LepA"/>
    <property type="match status" value="1"/>
</dbReference>
<dbReference type="CDD" id="cd03709">
    <property type="entry name" value="lepA_C"/>
    <property type="match status" value="1"/>
</dbReference>
<dbReference type="FunFam" id="3.40.50.300:FF:000078">
    <property type="entry name" value="Elongation factor 4"/>
    <property type="match status" value="1"/>
</dbReference>
<dbReference type="FunFam" id="2.40.30.10:FF:000015">
    <property type="entry name" value="Translation factor GUF1, mitochondrial"/>
    <property type="match status" value="1"/>
</dbReference>
<dbReference type="FunFam" id="3.30.70.240:FF:000007">
    <property type="entry name" value="Translation factor GUF1, mitochondrial"/>
    <property type="match status" value="1"/>
</dbReference>
<dbReference type="FunFam" id="3.30.70.2570:FF:000001">
    <property type="entry name" value="Translation factor GUF1, mitochondrial"/>
    <property type="match status" value="1"/>
</dbReference>
<dbReference type="FunFam" id="3.30.70.870:FF:000004">
    <property type="entry name" value="Translation factor GUF1, mitochondrial"/>
    <property type="match status" value="1"/>
</dbReference>
<dbReference type="Gene3D" id="3.30.70.240">
    <property type="match status" value="1"/>
</dbReference>
<dbReference type="Gene3D" id="3.30.70.2570">
    <property type="entry name" value="Elongation factor 4, C-terminal domain"/>
    <property type="match status" value="1"/>
</dbReference>
<dbReference type="Gene3D" id="3.30.70.870">
    <property type="entry name" value="Elongation Factor G (Translational Gtpase), domain 3"/>
    <property type="match status" value="1"/>
</dbReference>
<dbReference type="Gene3D" id="3.40.50.300">
    <property type="entry name" value="P-loop containing nucleotide triphosphate hydrolases"/>
    <property type="match status" value="1"/>
</dbReference>
<dbReference type="Gene3D" id="2.40.30.10">
    <property type="entry name" value="Translation factors"/>
    <property type="match status" value="1"/>
</dbReference>
<dbReference type="HAMAP" id="MF_03138">
    <property type="entry name" value="GUFP"/>
    <property type="match status" value="1"/>
</dbReference>
<dbReference type="HAMAP" id="MF_00071">
    <property type="entry name" value="LepA"/>
    <property type="match status" value="1"/>
</dbReference>
<dbReference type="InterPro" id="IPR006297">
    <property type="entry name" value="EF-4"/>
</dbReference>
<dbReference type="InterPro" id="IPR035647">
    <property type="entry name" value="EFG_III/V"/>
</dbReference>
<dbReference type="InterPro" id="IPR000640">
    <property type="entry name" value="EFG_V-like"/>
</dbReference>
<dbReference type="InterPro" id="IPR004161">
    <property type="entry name" value="EFTu-like_2"/>
</dbReference>
<dbReference type="InterPro" id="IPR031157">
    <property type="entry name" value="G_TR_CS"/>
</dbReference>
<dbReference type="InterPro" id="IPR027518">
    <property type="entry name" value="GUFP"/>
</dbReference>
<dbReference type="InterPro" id="IPR038363">
    <property type="entry name" value="LepA_C_sf"/>
</dbReference>
<dbReference type="InterPro" id="IPR013842">
    <property type="entry name" value="LepA_CTD"/>
</dbReference>
<dbReference type="InterPro" id="IPR035654">
    <property type="entry name" value="LepA_IV"/>
</dbReference>
<dbReference type="InterPro" id="IPR027417">
    <property type="entry name" value="P-loop_NTPase"/>
</dbReference>
<dbReference type="InterPro" id="IPR005225">
    <property type="entry name" value="Small_GTP-bd"/>
</dbReference>
<dbReference type="InterPro" id="IPR000795">
    <property type="entry name" value="T_Tr_GTP-bd_dom"/>
</dbReference>
<dbReference type="NCBIfam" id="TIGR01393">
    <property type="entry name" value="lepA"/>
    <property type="match status" value="1"/>
</dbReference>
<dbReference type="NCBIfam" id="TIGR00231">
    <property type="entry name" value="small_GTP"/>
    <property type="match status" value="1"/>
</dbReference>
<dbReference type="PANTHER" id="PTHR43512:SF4">
    <property type="entry name" value="TRANSLATION FACTOR GUF1 HOMOLOG, CHLOROPLASTIC"/>
    <property type="match status" value="1"/>
</dbReference>
<dbReference type="PANTHER" id="PTHR43512">
    <property type="entry name" value="TRANSLATION FACTOR GUF1-RELATED"/>
    <property type="match status" value="1"/>
</dbReference>
<dbReference type="Pfam" id="PF00679">
    <property type="entry name" value="EFG_C"/>
    <property type="match status" value="1"/>
</dbReference>
<dbReference type="Pfam" id="PF00009">
    <property type="entry name" value="GTP_EFTU"/>
    <property type="match status" value="1"/>
</dbReference>
<dbReference type="Pfam" id="PF03144">
    <property type="entry name" value="GTP_EFTU_D2"/>
    <property type="match status" value="1"/>
</dbReference>
<dbReference type="Pfam" id="PF06421">
    <property type="entry name" value="LepA_C"/>
    <property type="match status" value="1"/>
</dbReference>
<dbReference type="PRINTS" id="PR00315">
    <property type="entry name" value="ELONGATNFCT"/>
</dbReference>
<dbReference type="SMART" id="SM00838">
    <property type="entry name" value="EFG_C"/>
    <property type="match status" value="1"/>
</dbReference>
<dbReference type="SUPFAM" id="SSF54980">
    <property type="entry name" value="EF-G C-terminal domain-like"/>
    <property type="match status" value="2"/>
</dbReference>
<dbReference type="SUPFAM" id="SSF52540">
    <property type="entry name" value="P-loop containing nucleoside triphosphate hydrolases"/>
    <property type="match status" value="1"/>
</dbReference>
<dbReference type="PROSITE" id="PS00301">
    <property type="entry name" value="G_TR_1"/>
    <property type="match status" value="1"/>
</dbReference>
<dbReference type="PROSITE" id="PS51722">
    <property type="entry name" value="G_TR_2"/>
    <property type="match status" value="1"/>
</dbReference>
<evidence type="ECO:0000255" key="1">
    <source>
        <dbReference type="HAMAP-Rule" id="MF_00071"/>
    </source>
</evidence>
<organism>
    <name type="scientific">Rippkaea orientalis (strain PCC 8801 / RF-1)</name>
    <name type="common">Cyanothece sp. (strain PCC 8801)</name>
    <dbReference type="NCBI Taxonomy" id="41431"/>
    <lineage>
        <taxon>Bacteria</taxon>
        <taxon>Bacillati</taxon>
        <taxon>Cyanobacteriota</taxon>
        <taxon>Cyanophyceae</taxon>
        <taxon>Oscillatoriophycideae</taxon>
        <taxon>Chroococcales</taxon>
        <taxon>Aphanothecaceae</taxon>
        <taxon>Rippkaea</taxon>
        <taxon>Rippkaea orientalis</taxon>
    </lineage>
</organism>
<sequence length="603" mass="67420">MTDVPVSRIRNFSIIAHIDHGKSTLADRLLQDTGTVQQRQMKEQFLDNMDLERERGITIKLQAARMNYTAKDGEKYVLNLIDTPGHVDFSYEVSRSLAACEGALLVVDSSQGVEAQTLANVYLALDNNLEIIPILNKIDLPGSEPERVANEIEEVVGLDCSNIIKASAKAGIGIDEILESIVHLVPPPQDTVDQPLRALIFDSYYDAYRGVIVYFRVMDGQVKKGDRVRLMASGKEYEIDELGILSPNQIPIDSLHAGEVGYFAAAIKTVEDARVGDTITLAEKPAKEPLPGYTEANPMVFCGLFPTDADQYEDLREALEKLKLNDAALSYEPETSTAMGFGFRCGFLGLLHMEIVQERLEREYNLDLITTAPSVVYRVTTVDGEVTEIDNPSLLPPPQKREKIEEPYIQVEMITPETYVGTLMELCQSRRGVFKDMRYFTLSRTAVVYELPLAEVVTDFFDQLKSRSRGYASMEYHLIGYRENPLVKLDILVNGDSVDALAMIVHRDKAYYVGRALTEKLKELIPRHQFKVPIQAAIGSKVIASEHIPALRKDVLAKCYGGDISRKKKLLQKQAKGKKRMKSIGTVDVPQEAFMAVLKLDPQ</sequence>
<feature type="chain" id="PRO_1000117019" description="Elongation factor 4">
    <location>
        <begin position="1"/>
        <end position="603"/>
    </location>
</feature>
<feature type="domain" description="tr-type G">
    <location>
        <begin position="7"/>
        <end position="189"/>
    </location>
</feature>
<feature type="binding site" evidence="1">
    <location>
        <begin position="19"/>
        <end position="24"/>
    </location>
    <ligand>
        <name>GTP</name>
        <dbReference type="ChEBI" id="CHEBI:37565"/>
    </ligand>
</feature>
<feature type="binding site" evidence="1">
    <location>
        <begin position="136"/>
        <end position="139"/>
    </location>
    <ligand>
        <name>GTP</name>
        <dbReference type="ChEBI" id="CHEBI:37565"/>
    </ligand>
</feature>
<proteinExistence type="inferred from homology"/>
<comment type="function">
    <text evidence="1">Required for accurate and efficient protein synthesis under certain stress conditions. May act as a fidelity factor of the translation reaction, by catalyzing a one-codon backward translocation of tRNAs on improperly translocated ribosomes. Back-translocation proceeds from a post-translocation (POST) complex to a pre-translocation (PRE) complex, thus giving elongation factor G a second chance to translocate the tRNAs correctly. Binds to ribosomes in a GTP-dependent manner.</text>
</comment>
<comment type="catalytic activity">
    <reaction evidence="1">
        <text>GTP + H2O = GDP + phosphate + H(+)</text>
        <dbReference type="Rhea" id="RHEA:19669"/>
        <dbReference type="ChEBI" id="CHEBI:15377"/>
        <dbReference type="ChEBI" id="CHEBI:15378"/>
        <dbReference type="ChEBI" id="CHEBI:37565"/>
        <dbReference type="ChEBI" id="CHEBI:43474"/>
        <dbReference type="ChEBI" id="CHEBI:58189"/>
        <dbReference type="EC" id="3.6.5.n1"/>
    </reaction>
</comment>
<comment type="subcellular location">
    <subcellularLocation>
        <location evidence="1">Cell inner membrane</location>
        <topology evidence="1">Peripheral membrane protein</topology>
        <orientation evidence="1">Cytoplasmic side</orientation>
    </subcellularLocation>
</comment>
<comment type="similarity">
    <text evidence="1">Belongs to the TRAFAC class translation factor GTPase superfamily. Classic translation factor GTPase family. LepA subfamily.</text>
</comment>
<protein>
    <recommendedName>
        <fullName evidence="1">Elongation factor 4</fullName>
        <shortName evidence="1">EF-4</shortName>
        <ecNumber evidence="1">3.6.5.n1</ecNumber>
    </recommendedName>
    <alternativeName>
        <fullName evidence="1">Ribosomal back-translocase LepA</fullName>
    </alternativeName>
</protein>
<gene>
    <name evidence="1" type="primary">lepA</name>
    <name type="ordered locus">PCC8801_2529</name>
</gene>
<name>LEPA_RIPO1</name>
<accession>B7K3Z7</accession>